<name>RL7_RUTMC</name>
<sequence>MAKLTNEDILNAIADMSVMNVVELVSAMEEKFGVSAAPVAAPPVVADTIDDVVVEKDEFDVMLTSFGKKKVAVIKMARSITGLGLKEAKDMVESAPVVIKEGASKVEAEDIQKQLEEAGASVELK</sequence>
<accession>A1AX76</accession>
<feature type="chain" id="PRO_1000007078" description="Large ribosomal subunit protein bL12">
    <location>
        <begin position="1"/>
        <end position="125"/>
    </location>
</feature>
<comment type="function">
    <text evidence="1">Forms part of the ribosomal stalk which helps the ribosome interact with GTP-bound translation factors. Is thus essential for accurate translation.</text>
</comment>
<comment type="subunit">
    <text evidence="1">Homodimer. Part of the ribosomal stalk of the 50S ribosomal subunit. Forms a multimeric L10(L12)X complex, where L10 forms an elongated spine to which 2 to 4 L12 dimers bind in a sequential fashion. Binds GTP-bound translation factors.</text>
</comment>
<comment type="similarity">
    <text evidence="1">Belongs to the bacterial ribosomal protein bL12 family.</text>
</comment>
<organism>
    <name type="scientific">Ruthia magnifica subsp. Calyptogena magnifica</name>
    <dbReference type="NCBI Taxonomy" id="413404"/>
    <lineage>
        <taxon>Bacteria</taxon>
        <taxon>Pseudomonadati</taxon>
        <taxon>Pseudomonadota</taxon>
        <taxon>Gammaproteobacteria</taxon>
        <taxon>Candidatus Pseudothioglobaceae</taxon>
        <taxon>Candidatus Ruthturnera</taxon>
    </lineage>
</organism>
<dbReference type="EMBL" id="CP000488">
    <property type="protein sequence ID" value="ABL02533.1"/>
    <property type="molecule type" value="Genomic_DNA"/>
</dbReference>
<dbReference type="RefSeq" id="WP_011738158.1">
    <property type="nucleotide sequence ID" value="NC_008610.1"/>
</dbReference>
<dbReference type="SMR" id="A1AX76"/>
<dbReference type="STRING" id="413404.Rmag_0812"/>
<dbReference type="KEGG" id="rma:Rmag_0812"/>
<dbReference type="eggNOG" id="COG0222">
    <property type="taxonomic scope" value="Bacteria"/>
</dbReference>
<dbReference type="HOGENOM" id="CLU_086499_3_2_6"/>
<dbReference type="OrthoDB" id="9811748at2"/>
<dbReference type="Proteomes" id="UP000002587">
    <property type="component" value="Chromosome"/>
</dbReference>
<dbReference type="GO" id="GO:0022625">
    <property type="term" value="C:cytosolic large ribosomal subunit"/>
    <property type="evidence" value="ECO:0007669"/>
    <property type="project" value="TreeGrafter"/>
</dbReference>
<dbReference type="GO" id="GO:0003729">
    <property type="term" value="F:mRNA binding"/>
    <property type="evidence" value="ECO:0007669"/>
    <property type="project" value="TreeGrafter"/>
</dbReference>
<dbReference type="GO" id="GO:0003735">
    <property type="term" value="F:structural constituent of ribosome"/>
    <property type="evidence" value="ECO:0007669"/>
    <property type="project" value="InterPro"/>
</dbReference>
<dbReference type="GO" id="GO:0006412">
    <property type="term" value="P:translation"/>
    <property type="evidence" value="ECO:0007669"/>
    <property type="project" value="UniProtKB-UniRule"/>
</dbReference>
<dbReference type="CDD" id="cd00387">
    <property type="entry name" value="Ribosomal_L7_L12"/>
    <property type="match status" value="1"/>
</dbReference>
<dbReference type="FunFam" id="3.30.1390.10:FF:000001">
    <property type="entry name" value="50S ribosomal protein L7/L12"/>
    <property type="match status" value="1"/>
</dbReference>
<dbReference type="Gene3D" id="3.30.1390.10">
    <property type="match status" value="1"/>
</dbReference>
<dbReference type="Gene3D" id="1.20.5.710">
    <property type="entry name" value="Single helix bin"/>
    <property type="match status" value="1"/>
</dbReference>
<dbReference type="HAMAP" id="MF_00368">
    <property type="entry name" value="Ribosomal_bL12"/>
    <property type="match status" value="1"/>
</dbReference>
<dbReference type="InterPro" id="IPR000206">
    <property type="entry name" value="Ribosomal_bL12"/>
</dbReference>
<dbReference type="InterPro" id="IPR013823">
    <property type="entry name" value="Ribosomal_bL12_C"/>
</dbReference>
<dbReference type="InterPro" id="IPR014719">
    <property type="entry name" value="Ribosomal_bL12_C/ClpS-like"/>
</dbReference>
<dbReference type="InterPro" id="IPR008932">
    <property type="entry name" value="Ribosomal_bL12_oligo"/>
</dbReference>
<dbReference type="InterPro" id="IPR036235">
    <property type="entry name" value="Ribosomal_bL12_oligo_N_sf"/>
</dbReference>
<dbReference type="NCBIfam" id="TIGR00855">
    <property type="entry name" value="L12"/>
    <property type="match status" value="1"/>
</dbReference>
<dbReference type="PANTHER" id="PTHR45987">
    <property type="entry name" value="39S RIBOSOMAL PROTEIN L12"/>
    <property type="match status" value="1"/>
</dbReference>
<dbReference type="PANTHER" id="PTHR45987:SF4">
    <property type="entry name" value="LARGE RIBOSOMAL SUBUNIT PROTEIN BL12M"/>
    <property type="match status" value="1"/>
</dbReference>
<dbReference type="Pfam" id="PF00542">
    <property type="entry name" value="Ribosomal_L12"/>
    <property type="match status" value="1"/>
</dbReference>
<dbReference type="Pfam" id="PF16320">
    <property type="entry name" value="Ribosomal_L12_N"/>
    <property type="match status" value="1"/>
</dbReference>
<dbReference type="SUPFAM" id="SSF54736">
    <property type="entry name" value="ClpS-like"/>
    <property type="match status" value="1"/>
</dbReference>
<dbReference type="SUPFAM" id="SSF48300">
    <property type="entry name" value="Ribosomal protein L7/12, oligomerisation (N-terminal) domain"/>
    <property type="match status" value="1"/>
</dbReference>
<proteinExistence type="inferred from homology"/>
<keyword id="KW-0687">Ribonucleoprotein</keyword>
<keyword id="KW-0689">Ribosomal protein</keyword>
<protein>
    <recommendedName>
        <fullName evidence="1">Large ribosomal subunit protein bL12</fullName>
    </recommendedName>
    <alternativeName>
        <fullName evidence="2">50S ribosomal protein L7/L12</fullName>
    </alternativeName>
</protein>
<reference key="1">
    <citation type="journal article" date="2007" name="Science">
        <title>The Calyptogena magnifica chemoautotrophic symbiont genome.</title>
        <authorList>
            <person name="Newton I.L.G."/>
            <person name="Woyke T."/>
            <person name="Auchtung T.A."/>
            <person name="Dilly G.F."/>
            <person name="Dutton R.J."/>
            <person name="Fisher M.C."/>
            <person name="Fontanez K.M."/>
            <person name="Lau E."/>
            <person name="Stewart F.J."/>
            <person name="Richardson P.M."/>
            <person name="Barry K.W."/>
            <person name="Saunders E."/>
            <person name="Detter J.C."/>
            <person name="Wu D."/>
            <person name="Eisen J.A."/>
            <person name="Cavanaugh C.M."/>
        </authorList>
    </citation>
    <scope>NUCLEOTIDE SEQUENCE [LARGE SCALE GENOMIC DNA]</scope>
</reference>
<evidence type="ECO:0000255" key="1">
    <source>
        <dbReference type="HAMAP-Rule" id="MF_00368"/>
    </source>
</evidence>
<evidence type="ECO:0000305" key="2"/>
<gene>
    <name evidence="1" type="primary">rplL</name>
    <name type="ordered locus">Rmag_0812</name>
</gene>